<dbReference type="EMBL" id="X06377">
    <property type="protein sequence ID" value="CAA29679.1"/>
    <property type="molecule type" value="Genomic_DNA"/>
</dbReference>
<dbReference type="EMBL" id="X05900">
    <property type="protein sequence ID" value="CAA29329.1"/>
    <property type="molecule type" value="mRNA"/>
</dbReference>
<dbReference type="EMBL" id="M13534">
    <property type="protein sequence ID" value="AAA40979.1"/>
    <property type="molecule type" value="Genomic_DNA"/>
</dbReference>
<dbReference type="EMBL" id="M13527">
    <property type="protein sequence ID" value="AAA40979.1"/>
    <property type="status" value="JOINED"/>
    <property type="molecule type" value="Genomic_DNA"/>
</dbReference>
<dbReference type="EMBL" id="M13528">
    <property type="protein sequence ID" value="AAA40979.1"/>
    <property type="status" value="JOINED"/>
    <property type="molecule type" value="Genomic_DNA"/>
</dbReference>
<dbReference type="EMBL" id="M13530">
    <property type="protein sequence ID" value="AAA40979.1"/>
    <property type="status" value="JOINED"/>
    <property type="molecule type" value="Genomic_DNA"/>
</dbReference>
<dbReference type="EMBL" id="M13532">
    <property type="protein sequence ID" value="AAA40979.1"/>
    <property type="status" value="JOINED"/>
    <property type="molecule type" value="Genomic_DNA"/>
</dbReference>
<dbReference type="EMBL" id="BC126096">
    <property type="protein sequence ID" value="AAI26097.1"/>
    <property type="molecule type" value="mRNA"/>
</dbReference>
<dbReference type="EMBL" id="AF286652">
    <property type="protein sequence ID" value="AAF97950.1"/>
    <property type="molecule type" value="mRNA"/>
</dbReference>
<dbReference type="PIR" id="A02925">
    <property type="entry name" value="CYRTB1"/>
</dbReference>
<dbReference type="RefSeq" id="NP_037068.2">
    <property type="nucleotide sequence ID" value="NM_012936.3"/>
</dbReference>
<dbReference type="SMR" id="P02523"/>
<dbReference type="FunCoup" id="P02523">
    <property type="interactions" value="28"/>
</dbReference>
<dbReference type="STRING" id="10116.ENSRNOP00000064741"/>
<dbReference type="GlyGen" id="P02523">
    <property type="glycosylation" value="1 site"/>
</dbReference>
<dbReference type="iPTMnet" id="P02523"/>
<dbReference type="PhosphoSitePlus" id="P02523"/>
<dbReference type="PaxDb" id="10116-ENSRNOP00000064741"/>
<dbReference type="Ensembl" id="ENSRNOT00000073072.3">
    <property type="protein sequence ID" value="ENSRNOP00000064741.1"/>
    <property type="gene ID" value="ENSRNOG00000047653.4"/>
</dbReference>
<dbReference type="GeneID" id="25421"/>
<dbReference type="KEGG" id="rno:25421"/>
<dbReference type="AGR" id="RGD:2416"/>
<dbReference type="CTD" id="1414"/>
<dbReference type="RGD" id="2416">
    <property type="gene designation" value="Crybb1"/>
</dbReference>
<dbReference type="eggNOG" id="ENOG502QTJT">
    <property type="taxonomic scope" value="Eukaryota"/>
</dbReference>
<dbReference type="GeneTree" id="ENSGT00940000160516"/>
<dbReference type="InParanoid" id="P02523"/>
<dbReference type="OMA" id="RQWHHEG"/>
<dbReference type="OrthoDB" id="68246at9989"/>
<dbReference type="PhylomeDB" id="P02523"/>
<dbReference type="PRO" id="PR:P02523"/>
<dbReference type="Proteomes" id="UP000002494">
    <property type="component" value="Chromosome 12"/>
</dbReference>
<dbReference type="Bgee" id="ENSRNOG00000047653">
    <property type="expression patterns" value="Expressed in heart and 13 other cell types or tissues"/>
</dbReference>
<dbReference type="ExpressionAtlas" id="P02523">
    <property type="expression patterns" value="baseline and differential"/>
</dbReference>
<dbReference type="GO" id="GO:0005212">
    <property type="term" value="F:structural constituent of eye lens"/>
    <property type="evidence" value="ECO:0000314"/>
    <property type="project" value="RGD"/>
</dbReference>
<dbReference type="GO" id="GO:0002088">
    <property type="term" value="P:lens development in camera-type eye"/>
    <property type="evidence" value="ECO:0000318"/>
    <property type="project" value="GO_Central"/>
</dbReference>
<dbReference type="GO" id="GO:0007601">
    <property type="term" value="P:visual perception"/>
    <property type="evidence" value="ECO:0000318"/>
    <property type="project" value="GO_Central"/>
</dbReference>
<dbReference type="FunFam" id="2.60.20.10:FF:000005">
    <property type="entry name" value="Crystallin, beta B1"/>
    <property type="match status" value="1"/>
</dbReference>
<dbReference type="FunFam" id="2.60.20.10:FF:000002">
    <property type="entry name" value="Crystallin, beta B2"/>
    <property type="match status" value="1"/>
</dbReference>
<dbReference type="Gene3D" id="2.60.20.10">
    <property type="entry name" value="Crystallins"/>
    <property type="match status" value="2"/>
</dbReference>
<dbReference type="InterPro" id="IPR050252">
    <property type="entry name" value="Beta/Gamma-Crystallin"/>
</dbReference>
<dbReference type="InterPro" id="IPR001064">
    <property type="entry name" value="Beta/gamma_crystallin"/>
</dbReference>
<dbReference type="InterPro" id="IPR011024">
    <property type="entry name" value="G_crystallin-like"/>
</dbReference>
<dbReference type="PANTHER" id="PTHR11818:SF12">
    <property type="entry name" value="BETA-CRYSTALLIN B1"/>
    <property type="match status" value="1"/>
</dbReference>
<dbReference type="PANTHER" id="PTHR11818">
    <property type="entry name" value="BETA/GAMMA CRYSTALLIN"/>
    <property type="match status" value="1"/>
</dbReference>
<dbReference type="Pfam" id="PF00030">
    <property type="entry name" value="Crystall"/>
    <property type="match status" value="2"/>
</dbReference>
<dbReference type="PRINTS" id="PR01367">
    <property type="entry name" value="BGCRYSTALLIN"/>
</dbReference>
<dbReference type="SMART" id="SM00247">
    <property type="entry name" value="XTALbg"/>
    <property type="match status" value="2"/>
</dbReference>
<dbReference type="SUPFAM" id="SSF49695">
    <property type="entry name" value="gamma-Crystallin-like"/>
    <property type="match status" value="1"/>
</dbReference>
<dbReference type="PROSITE" id="PS50915">
    <property type="entry name" value="CRYSTALLIN_BETA_GAMMA"/>
    <property type="match status" value="4"/>
</dbReference>
<feature type="initiator methionine" description="Removed" evidence="3">
    <location>
        <position position="1"/>
    </location>
</feature>
<feature type="chain" id="PRO_0000006339" description="Beta-crystallin B1">
    <location>
        <begin position="2"/>
        <end position="250"/>
    </location>
</feature>
<feature type="chain" id="PRO_0000006340" description="Beta-crystallin B1B">
    <location>
        <begin position="12"/>
        <end position="250"/>
    </location>
</feature>
<feature type="domain" description="Beta/gamma crystallin 'Greek key' 1" evidence="1">
    <location>
        <begin position="57"/>
        <end position="96"/>
    </location>
</feature>
<feature type="domain" description="Beta/gamma crystallin 'Greek key' 2" evidence="1">
    <location>
        <begin position="97"/>
        <end position="141"/>
    </location>
</feature>
<feature type="domain" description="Beta/gamma crystallin 'Greek key' 3" evidence="1">
    <location>
        <begin position="147"/>
        <end position="188"/>
    </location>
</feature>
<feature type="domain" description="Beta/gamma crystallin 'Greek key' 4" evidence="1">
    <location>
        <begin position="189"/>
        <end position="231"/>
    </location>
</feature>
<feature type="region of interest" description="Disordered" evidence="2">
    <location>
        <begin position="1"/>
        <end position="47"/>
    </location>
</feature>
<feature type="region of interest" description="N-terminal arm">
    <location>
        <begin position="2"/>
        <end position="56"/>
    </location>
</feature>
<feature type="region of interest" description="Connecting peptide">
    <location>
        <begin position="142"/>
        <end position="146"/>
    </location>
</feature>
<feature type="region of interest" description="C-terminal arm">
    <location>
        <begin position="233"/>
        <end position="250"/>
    </location>
</feature>
<feature type="compositionally biased region" description="Pro residues" evidence="2">
    <location>
        <begin position="32"/>
        <end position="42"/>
    </location>
</feature>
<feature type="modified residue" description="N-acetylserine" evidence="3">
    <location>
        <position position="2"/>
    </location>
</feature>
<feature type="sequence conflict" description="In Ref. 1; CAA29679 and 2; AAA40979." evidence="4" ref="1 2">
    <original>PD</original>
    <variation>Y</variation>
    <location>
        <begin position="17"/>
        <end position="18"/>
    </location>
</feature>
<accession>P02523</accession>
<accession>A0JN26</accession>
<accession>Q9JHV9</accession>
<comment type="function">
    <text>Crystallins are the dominant structural components of the vertebrate eye lens.</text>
</comment>
<comment type="subunit">
    <text>Homo/heterodimer, or complexes of higher-order. The structure of beta-crystallin oligomers seems to be stabilized through interactions between the N-terminal arms.</text>
</comment>
<comment type="domain">
    <text>Has a two-domain beta-structure, folded into four very similar Greek key motifs.</text>
</comment>
<comment type="PTM">
    <text>Specific cleavages in the N-terminal arm occur during lens maturation and give rise to truncated forms, leading to impaired oligomerization and protein insolubilization. The protease responsible for this partial degradation could be calpain II.</text>
</comment>
<comment type="mass spectrometry">
    <molecule>Beta-crystallin B1</molecule>
</comment>
<comment type="similarity">
    <text evidence="4">Belongs to the beta/gamma-crystallin family.</text>
</comment>
<keyword id="KW-0007">Acetylation</keyword>
<keyword id="KW-0903">Direct protein sequencing</keyword>
<keyword id="KW-0273">Eye lens protein</keyword>
<keyword id="KW-0488">Methylation</keyword>
<keyword id="KW-1185">Reference proteome</keyword>
<keyword id="KW-0677">Repeat</keyword>
<organism>
    <name type="scientific">Rattus norvegicus</name>
    <name type="common">Rat</name>
    <dbReference type="NCBI Taxonomy" id="10116"/>
    <lineage>
        <taxon>Eukaryota</taxon>
        <taxon>Metazoa</taxon>
        <taxon>Chordata</taxon>
        <taxon>Craniata</taxon>
        <taxon>Vertebrata</taxon>
        <taxon>Euteleostomi</taxon>
        <taxon>Mammalia</taxon>
        <taxon>Eutheria</taxon>
        <taxon>Euarchontoglires</taxon>
        <taxon>Glires</taxon>
        <taxon>Rodentia</taxon>
        <taxon>Myomorpha</taxon>
        <taxon>Muroidea</taxon>
        <taxon>Muridae</taxon>
        <taxon>Murinae</taxon>
        <taxon>Rattus</taxon>
    </lineage>
</organism>
<proteinExistence type="evidence at protein level"/>
<sequence>MSQVAKAAATTAVNPGPDGKGKGTPSTGTAPAPGPTPVPASVPRPAAKVGELPPGSYRLVVFEQENFQGRRVEFSGECLNLGDRGFDRVRSLIVLSGPWVAFEQSAFRGEMFVLEKGEYPRWDTWTSSYRSDRLMSFRPIRMDSQEHKICLFEGANFKGNTMEIQEDDVPSLWVYGFCDRVGSITVSSGTWVGYQYPGYRGYQYLLEPGDFRHWNEWGAFQPQMQAVRRLRDRQWHQEGCFPVLTAEPPK</sequence>
<reference key="1">
    <citation type="journal article" date="1985" name="Biochim. Biophys. Acta">
        <title>Rat lens beta-crystallins are internally duplicated and homologous to gamma-crystallins.</title>
        <authorList>
            <person name="den Dunnen J.T."/>
            <person name="Moormann R.J.M."/>
            <person name="Schoenmakers J.G.G."/>
        </authorList>
    </citation>
    <scope>NUCLEOTIDE SEQUENCE [GENOMIC DNA] OF 1-50</scope>
    <scope>NUCLEOTIDE SEQUENCE [MRNA] OF 51-250</scope>
</reference>
<reference key="2">
    <citation type="journal article" date="1986" name="Proc. Natl. Acad. Sci. U.S.A.">
        <title>Intron insertions and deletions in the beta/gamma-crystallin gene family: the rat beta B1 gene.</title>
        <authorList>
            <person name="den Dunnen J.T."/>
            <person name="Moormann R.J.M."/>
            <person name="Lubsen N.H."/>
            <person name="Schoenmakers J.G.G."/>
        </authorList>
    </citation>
    <scope>NUCLEOTIDE SEQUENCE [GENOMIC DNA]</scope>
</reference>
<reference key="3">
    <citation type="journal article" date="2004" name="Genome Res.">
        <title>The status, quality, and expansion of the NIH full-length cDNA project: the Mammalian Gene Collection (MGC).</title>
        <authorList>
            <consortium name="The MGC Project Team"/>
        </authorList>
    </citation>
    <scope>NUCLEOTIDE SEQUENCE [LARGE SCALE MRNA]</scope>
    <source>
        <tissue>Brain</tissue>
    </source>
</reference>
<reference key="4">
    <citation type="journal article" date="2002" name="Invest. Ophthalmol. Vis. Sci.">
        <title>Lens proteomics: analysis of rat crystallin sequences and two-dimensional electrophoresis map.</title>
        <authorList>
            <person name="Lampi K.J."/>
            <person name="Shih M."/>
            <person name="Ueda Y."/>
            <person name="Shearer T.R."/>
            <person name="David L.L."/>
        </authorList>
    </citation>
    <scope>NUCLEOTIDE SEQUENCE [MRNA] OF 6-250</scope>
    <scope>PROTEIN SEQUENCE OF 2-250</scope>
    <scope>ACETYLATION AT SER-2</scope>
    <scope>MASS SPECTROMETRY</scope>
    <source>
        <strain>Sprague-Dawley</strain>
        <tissue>Lens</tissue>
    </source>
</reference>
<reference key="5">
    <citation type="journal article" date="1993" name="FEBS Lett.">
        <title>Beta-crystallins insolubilized by calpain II in vitro contain cleavage sites similar to beta-crystallins insolubilized during cataract.</title>
        <authorList>
            <person name="David L.L."/>
            <person name="Shearer T.R."/>
        </authorList>
    </citation>
    <scope>PROTEIN SEQUENCE OF 51-56</scope>
</reference>
<protein>
    <recommendedName>
        <fullName>Beta-crystallin B1</fullName>
    </recommendedName>
    <alternativeName>
        <fullName>Beta-B1 crystallin</fullName>
    </alternativeName>
    <component>
        <recommendedName>
            <fullName>Beta-crystallin B1B</fullName>
        </recommendedName>
    </component>
</protein>
<gene>
    <name type="primary">Crybb1</name>
</gene>
<evidence type="ECO:0000255" key="1">
    <source>
        <dbReference type="PROSITE-ProRule" id="PRU00028"/>
    </source>
</evidence>
<evidence type="ECO:0000256" key="2">
    <source>
        <dbReference type="SAM" id="MobiDB-lite"/>
    </source>
</evidence>
<evidence type="ECO:0000269" key="3">
    <source>
    </source>
</evidence>
<evidence type="ECO:0000305" key="4"/>
<name>CRBB1_RAT</name>